<evidence type="ECO:0000255" key="1">
    <source>
        <dbReference type="HAMAP-Rule" id="MF_00501"/>
    </source>
</evidence>
<evidence type="ECO:0000305" key="2"/>
<reference key="1">
    <citation type="journal article" date="2013" name="Plant Physiol.">
        <title>A Nostoc punctiforme Sugar Transporter Necessary to Establish a Cyanobacterium-Plant Symbiosis.</title>
        <authorList>
            <person name="Ekman M."/>
            <person name="Picossi S."/>
            <person name="Campbell E.L."/>
            <person name="Meeks J.C."/>
            <person name="Flores E."/>
        </authorList>
    </citation>
    <scope>NUCLEOTIDE SEQUENCE [LARGE SCALE GENOMIC DNA]</scope>
    <source>
        <strain>ATCC 29133 / PCC 73102</strain>
    </source>
</reference>
<protein>
    <recommendedName>
        <fullName evidence="1">Large ribosomal subunit protein bL31</fullName>
    </recommendedName>
    <alternativeName>
        <fullName evidence="2">50S ribosomal protein L31</fullName>
    </alternativeName>
</protein>
<accession>B2ITM6</accession>
<keyword id="KW-1185">Reference proteome</keyword>
<keyword id="KW-0687">Ribonucleoprotein</keyword>
<keyword id="KW-0689">Ribosomal protein</keyword>
<keyword id="KW-0694">RNA-binding</keyword>
<keyword id="KW-0699">rRNA-binding</keyword>
<sequence length="80" mass="9091">MAKADIHPKWYPDAKVYCNGQVVMTIGSTKPELHVDVWSGNHPFYTGTQKIIDTEGRVERFLRKYGMSSTQTSGDEQTKK</sequence>
<organism>
    <name type="scientific">Nostoc punctiforme (strain ATCC 29133 / PCC 73102)</name>
    <dbReference type="NCBI Taxonomy" id="63737"/>
    <lineage>
        <taxon>Bacteria</taxon>
        <taxon>Bacillati</taxon>
        <taxon>Cyanobacteriota</taxon>
        <taxon>Cyanophyceae</taxon>
        <taxon>Nostocales</taxon>
        <taxon>Nostocaceae</taxon>
        <taxon>Nostoc</taxon>
    </lineage>
</organism>
<proteinExistence type="inferred from homology"/>
<name>RL31_NOSP7</name>
<feature type="chain" id="PRO_1000126676" description="Large ribosomal subunit protein bL31">
    <location>
        <begin position="1"/>
        <end position="80"/>
    </location>
</feature>
<gene>
    <name evidence="1" type="primary">rpmE</name>
    <name evidence="1" type="synonym">rpl31</name>
    <name type="ordered locus">Npun_R4361</name>
</gene>
<dbReference type="EMBL" id="CP001037">
    <property type="protein sequence ID" value="ACC82734.1"/>
    <property type="molecule type" value="Genomic_DNA"/>
</dbReference>
<dbReference type="RefSeq" id="WP_012410697.1">
    <property type="nucleotide sequence ID" value="NC_010628.1"/>
</dbReference>
<dbReference type="STRING" id="63737.Npun_R4361"/>
<dbReference type="EnsemblBacteria" id="ACC82734">
    <property type="protein sequence ID" value="ACC82734"/>
    <property type="gene ID" value="Npun_R4361"/>
</dbReference>
<dbReference type="KEGG" id="npu:Npun_R4361"/>
<dbReference type="eggNOG" id="COG0254">
    <property type="taxonomic scope" value="Bacteria"/>
</dbReference>
<dbReference type="HOGENOM" id="CLU_114306_1_2_3"/>
<dbReference type="OrthoDB" id="9803251at2"/>
<dbReference type="PhylomeDB" id="B2ITM6"/>
<dbReference type="Proteomes" id="UP000001191">
    <property type="component" value="Chromosome"/>
</dbReference>
<dbReference type="GO" id="GO:1990904">
    <property type="term" value="C:ribonucleoprotein complex"/>
    <property type="evidence" value="ECO:0007669"/>
    <property type="project" value="UniProtKB-KW"/>
</dbReference>
<dbReference type="GO" id="GO:0005840">
    <property type="term" value="C:ribosome"/>
    <property type="evidence" value="ECO:0007669"/>
    <property type="project" value="UniProtKB-KW"/>
</dbReference>
<dbReference type="GO" id="GO:0019843">
    <property type="term" value="F:rRNA binding"/>
    <property type="evidence" value="ECO:0007669"/>
    <property type="project" value="UniProtKB-KW"/>
</dbReference>
<dbReference type="GO" id="GO:0003735">
    <property type="term" value="F:structural constituent of ribosome"/>
    <property type="evidence" value="ECO:0007669"/>
    <property type="project" value="InterPro"/>
</dbReference>
<dbReference type="GO" id="GO:0006412">
    <property type="term" value="P:translation"/>
    <property type="evidence" value="ECO:0007669"/>
    <property type="project" value="UniProtKB-UniRule"/>
</dbReference>
<dbReference type="Gene3D" id="4.10.830.30">
    <property type="entry name" value="Ribosomal protein L31"/>
    <property type="match status" value="1"/>
</dbReference>
<dbReference type="HAMAP" id="MF_00501">
    <property type="entry name" value="Ribosomal_bL31_1"/>
    <property type="match status" value="1"/>
</dbReference>
<dbReference type="InterPro" id="IPR034704">
    <property type="entry name" value="Ribosomal_bL28/bL31-like_sf"/>
</dbReference>
<dbReference type="InterPro" id="IPR002150">
    <property type="entry name" value="Ribosomal_bL31"/>
</dbReference>
<dbReference type="InterPro" id="IPR027491">
    <property type="entry name" value="Ribosomal_bL31_A"/>
</dbReference>
<dbReference type="InterPro" id="IPR042105">
    <property type="entry name" value="Ribosomal_bL31_sf"/>
</dbReference>
<dbReference type="NCBIfam" id="TIGR00105">
    <property type="entry name" value="L31"/>
    <property type="match status" value="1"/>
</dbReference>
<dbReference type="NCBIfam" id="NF000612">
    <property type="entry name" value="PRK00019.1"/>
    <property type="match status" value="1"/>
</dbReference>
<dbReference type="NCBIfam" id="NF001809">
    <property type="entry name" value="PRK00528.1"/>
    <property type="match status" value="1"/>
</dbReference>
<dbReference type="PANTHER" id="PTHR33280">
    <property type="entry name" value="50S RIBOSOMAL PROTEIN L31, CHLOROPLASTIC"/>
    <property type="match status" value="1"/>
</dbReference>
<dbReference type="PANTHER" id="PTHR33280:SF1">
    <property type="entry name" value="LARGE RIBOSOMAL SUBUNIT PROTEIN BL31C"/>
    <property type="match status" value="1"/>
</dbReference>
<dbReference type="Pfam" id="PF01197">
    <property type="entry name" value="Ribosomal_L31"/>
    <property type="match status" value="1"/>
</dbReference>
<dbReference type="PRINTS" id="PR01249">
    <property type="entry name" value="RIBOSOMALL31"/>
</dbReference>
<dbReference type="SUPFAM" id="SSF143800">
    <property type="entry name" value="L28p-like"/>
    <property type="match status" value="1"/>
</dbReference>
<dbReference type="PROSITE" id="PS01143">
    <property type="entry name" value="RIBOSOMAL_L31"/>
    <property type="match status" value="1"/>
</dbReference>
<comment type="function">
    <text evidence="1">Binds the 23S rRNA.</text>
</comment>
<comment type="subunit">
    <text evidence="1">Part of the 50S ribosomal subunit.</text>
</comment>
<comment type="similarity">
    <text evidence="1">Belongs to the bacterial ribosomal protein bL31 family. Type A subfamily.</text>
</comment>